<keyword id="KW-0067">ATP-binding</keyword>
<keyword id="KW-0217">Developmental protein</keyword>
<keyword id="KW-0378">Hydrolase</keyword>
<keyword id="KW-0433">Leucine-rich repeat</keyword>
<keyword id="KW-0520">NAD</keyword>
<keyword id="KW-0547">Nucleotide-binding</keyword>
<keyword id="KW-0611">Plant defense</keyword>
<keyword id="KW-1185">Reference proteome</keyword>
<keyword id="KW-0677">Repeat</keyword>
<dbReference type="EC" id="3.2.2.6" evidence="2"/>
<dbReference type="EMBL" id="AB011480">
    <property type="protein sequence ID" value="BAB11221.1"/>
    <property type="status" value="ALT_SEQ"/>
    <property type="molecule type" value="Genomic_DNA"/>
</dbReference>
<dbReference type="EMBL" id="CP002688">
    <property type="protein sequence ID" value="AED92481.1"/>
    <property type="molecule type" value="Genomic_DNA"/>
</dbReference>
<dbReference type="RefSeq" id="NP_197290.1">
    <property type="nucleotide sequence ID" value="NM_121794.2"/>
</dbReference>
<dbReference type="SMR" id="F4KIF3"/>
<dbReference type="FunCoup" id="F4KIF3">
    <property type="interactions" value="1"/>
</dbReference>
<dbReference type="STRING" id="3702.F4KIF3"/>
<dbReference type="iPTMnet" id="F4KIF3"/>
<dbReference type="PaxDb" id="3702-AT5G17880.1"/>
<dbReference type="ProteomicsDB" id="222765"/>
<dbReference type="EnsemblPlants" id="AT5G17880.1">
    <property type="protein sequence ID" value="AT5G17880.1"/>
    <property type="gene ID" value="AT5G17880"/>
</dbReference>
<dbReference type="GeneID" id="831656"/>
<dbReference type="Gramene" id="AT5G17880.1">
    <property type="protein sequence ID" value="AT5G17880.1"/>
    <property type="gene ID" value="AT5G17880"/>
</dbReference>
<dbReference type="KEGG" id="ath:AT5G17880"/>
<dbReference type="Araport" id="AT5G17880"/>
<dbReference type="TAIR" id="AT5G17880">
    <property type="gene designation" value="CSA1"/>
</dbReference>
<dbReference type="eggNOG" id="ENOG502SI7S">
    <property type="taxonomic scope" value="Eukaryota"/>
</dbReference>
<dbReference type="HOGENOM" id="CLU_001561_0_3_1"/>
<dbReference type="InParanoid" id="F4KIF3"/>
<dbReference type="PRO" id="PR:F4KIF3"/>
<dbReference type="Proteomes" id="UP000006548">
    <property type="component" value="Chromosome 5"/>
</dbReference>
<dbReference type="ExpressionAtlas" id="F4KIF3">
    <property type="expression patterns" value="baseline and differential"/>
</dbReference>
<dbReference type="GO" id="GO:0043531">
    <property type="term" value="F:ADP binding"/>
    <property type="evidence" value="ECO:0007669"/>
    <property type="project" value="InterPro"/>
</dbReference>
<dbReference type="GO" id="GO:0005524">
    <property type="term" value="F:ATP binding"/>
    <property type="evidence" value="ECO:0007669"/>
    <property type="project" value="UniProtKB-KW"/>
</dbReference>
<dbReference type="GO" id="GO:0061809">
    <property type="term" value="F:NAD+ nucleosidase activity, cyclic ADP-ribose generating"/>
    <property type="evidence" value="ECO:0007669"/>
    <property type="project" value="UniProtKB-EC"/>
</dbReference>
<dbReference type="GO" id="GO:0042742">
    <property type="term" value="P:defense response to bacterium"/>
    <property type="evidence" value="ECO:0000315"/>
    <property type="project" value="TAIR"/>
</dbReference>
<dbReference type="GO" id="GO:0009416">
    <property type="term" value="P:response to light stimulus"/>
    <property type="evidence" value="ECO:0000315"/>
    <property type="project" value="TAIR"/>
</dbReference>
<dbReference type="GO" id="GO:0010114">
    <property type="term" value="P:response to red light"/>
    <property type="evidence" value="ECO:0000315"/>
    <property type="project" value="TAIR"/>
</dbReference>
<dbReference type="GO" id="GO:0007165">
    <property type="term" value="P:signal transduction"/>
    <property type="evidence" value="ECO:0007669"/>
    <property type="project" value="InterPro"/>
</dbReference>
<dbReference type="FunFam" id="3.40.50.10140:FF:000007">
    <property type="entry name" value="Disease resistance protein (TIR-NBS-LRR class)"/>
    <property type="match status" value="1"/>
</dbReference>
<dbReference type="FunFam" id="3.40.50.300:FF:001862">
    <property type="entry name" value="Disease resistance protein RPS4"/>
    <property type="match status" value="1"/>
</dbReference>
<dbReference type="FunFam" id="3.80.10.10:FF:000386">
    <property type="entry name" value="Disease resistance protein RPS4"/>
    <property type="match status" value="1"/>
</dbReference>
<dbReference type="FunFam" id="3.80.10.10:FF:000568">
    <property type="entry name" value="Disease resistance protein RPS4"/>
    <property type="match status" value="1"/>
</dbReference>
<dbReference type="Gene3D" id="3.40.50.300">
    <property type="entry name" value="P-loop containing nucleotide triphosphate hydrolases"/>
    <property type="match status" value="1"/>
</dbReference>
<dbReference type="Gene3D" id="3.80.10.10">
    <property type="entry name" value="Ribonuclease Inhibitor"/>
    <property type="match status" value="2"/>
</dbReference>
<dbReference type="Gene3D" id="3.40.50.10140">
    <property type="entry name" value="Toll/interleukin-1 receptor homology (TIR) domain"/>
    <property type="match status" value="1"/>
</dbReference>
<dbReference type="InterPro" id="IPR045344">
    <property type="entry name" value="C-JID"/>
</dbReference>
<dbReference type="InterPro" id="IPR044974">
    <property type="entry name" value="Disease_R_plants"/>
</dbReference>
<dbReference type="InterPro" id="IPR011713">
    <property type="entry name" value="Leu-rich_rpt_3"/>
</dbReference>
<dbReference type="InterPro" id="IPR032675">
    <property type="entry name" value="LRR_dom_sf"/>
</dbReference>
<dbReference type="InterPro" id="IPR055414">
    <property type="entry name" value="LRR_R13L4/SHOC2-like"/>
</dbReference>
<dbReference type="InterPro" id="IPR002182">
    <property type="entry name" value="NB-ARC"/>
</dbReference>
<dbReference type="InterPro" id="IPR027417">
    <property type="entry name" value="P-loop_NTPase"/>
</dbReference>
<dbReference type="InterPro" id="IPR000157">
    <property type="entry name" value="TIR_dom"/>
</dbReference>
<dbReference type="InterPro" id="IPR035897">
    <property type="entry name" value="Toll_tir_struct_dom_sf"/>
</dbReference>
<dbReference type="PANTHER" id="PTHR11017:SF424">
    <property type="entry name" value="DISEASE RESISTANCE-LIKE PROTEIN CSA1"/>
    <property type="match status" value="1"/>
</dbReference>
<dbReference type="PANTHER" id="PTHR11017">
    <property type="entry name" value="LEUCINE-RICH REPEAT-CONTAINING PROTEIN"/>
    <property type="match status" value="1"/>
</dbReference>
<dbReference type="Pfam" id="PF20160">
    <property type="entry name" value="C-JID"/>
    <property type="match status" value="1"/>
</dbReference>
<dbReference type="Pfam" id="PF23598">
    <property type="entry name" value="LRR_14"/>
    <property type="match status" value="1"/>
</dbReference>
<dbReference type="Pfam" id="PF07725">
    <property type="entry name" value="LRR_3"/>
    <property type="match status" value="1"/>
</dbReference>
<dbReference type="Pfam" id="PF00931">
    <property type="entry name" value="NB-ARC"/>
    <property type="match status" value="1"/>
</dbReference>
<dbReference type="Pfam" id="PF01582">
    <property type="entry name" value="TIR"/>
    <property type="match status" value="1"/>
</dbReference>
<dbReference type="PRINTS" id="PR00364">
    <property type="entry name" value="DISEASERSIST"/>
</dbReference>
<dbReference type="SMART" id="SM00255">
    <property type="entry name" value="TIR"/>
    <property type="match status" value="1"/>
</dbReference>
<dbReference type="SUPFAM" id="SSF52058">
    <property type="entry name" value="L domain-like"/>
    <property type="match status" value="1"/>
</dbReference>
<dbReference type="SUPFAM" id="SSF52540">
    <property type="entry name" value="P-loop containing nucleoside triphosphate hydrolases"/>
    <property type="match status" value="1"/>
</dbReference>
<dbReference type="SUPFAM" id="SSF52200">
    <property type="entry name" value="Toll/Interleukin receptor TIR domain"/>
    <property type="match status" value="1"/>
</dbReference>
<dbReference type="PROSITE" id="PS50104">
    <property type="entry name" value="TIR"/>
    <property type="match status" value="1"/>
</dbReference>
<name>CSA1_ARATH</name>
<organism>
    <name type="scientific">Arabidopsis thaliana</name>
    <name type="common">Mouse-ear cress</name>
    <dbReference type="NCBI Taxonomy" id="3702"/>
    <lineage>
        <taxon>Eukaryota</taxon>
        <taxon>Viridiplantae</taxon>
        <taxon>Streptophyta</taxon>
        <taxon>Embryophyta</taxon>
        <taxon>Tracheophyta</taxon>
        <taxon>Spermatophyta</taxon>
        <taxon>Magnoliopsida</taxon>
        <taxon>eudicotyledons</taxon>
        <taxon>Gunneridae</taxon>
        <taxon>Pentapetalae</taxon>
        <taxon>rosids</taxon>
        <taxon>malvids</taxon>
        <taxon>Brassicales</taxon>
        <taxon>Brassicaceae</taxon>
        <taxon>Camelineae</taxon>
        <taxon>Arabidopsis</taxon>
    </lineage>
</organism>
<reference key="1">
    <citation type="journal article" date="1998" name="DNA Res.">
        <title>Structural analysis of Arabidopsis thaliana chromosome 5. V. Sequence features of the regions of 1,381,565 bp covered by twenty one physically assigned P1 and TAC clones.</title>
        <authorList>
            <person name="Kaneko T."/>
            <person name="Kotani H."/>
            <person name="Nakamura Y."/>
            <person name="Sato S."/>
            <person name="Asamizu E."/>
            <person name="Miyajima N."/>
            <person name="Tabata S."/>
        </authorList>
    </citation>
    <scope>NUCLEOTIDE SEQUENCE [LARGE SCALE GENOMIC DNA]</scope>
    <source>
        <strain>cv. Columbia</strain>
    </source>
</reference>
<reference key="2">
    <citation type="journal article" date="2017" name="Plant J.">
        <title>Araport11: a complete reannotation of the Arabidopsis thaliana reference genome.</title>
        <authorList>
            <person name="Cheng C.Y."/>
            <person name="Krishnakumar V."/>
            <person name="Chan A.P."/>
            <person name="Thibaud-Nissen F."/>
            <person name="Schobel S."/>
            <person name="Town C.D."/>
        </authorList>
    </citation>
    <scope>GENOME REANNOTATION</scope>
    <source>
        <strain>cv. Columbia</strain>
    </source>
</reference>
<reference key="3">
    <citation type="journal article" date="2006" name="Plant Cell">
        <title>A constitutive shade-avoidance mutant implicates TIR-NBS-LRR proteins in Arabidopsis photomorphogenic development.</title>
        <authorList>
            <person name="Faigon-Soverna A."/>
            <person name="Harmon F.G."/>
            <person name="Storani L."/>
            <person name="Karayekov E."/>
            <person name="Staneloni R.J."/>
            <person name="Gassmann W."/>
            <person name="Mas P."/>
            <person name="Casal J.J."/>
            <person name="Kay S.A."/>
            <person name="Yanovsky M.J."/>
        </authorList>
    </citation>
    <scope>FUNCTION</scope>
    <scope>DISRUPTION PHENOTYPE</scope>
</reference>
<protein>
    <recommendedName>
        <fullName evidence="5">Disease resistance-like protein CSA1</fullName>
        <ecNumber evidence="2">3.2.2.6</ecNumber>
    </recommendedName>
    <alternativeName>
        <fullName evidence="4">Protein CONSTITUTIVE SHADE-AVOIDANCE 1</fullName>
    </alternativeName>
</protein>
<evidence type="ECO:0000255" key="1"/>
<evidence type="ECO:0000255" key="2">
    <source>
        <dbReference type="PROSITE-ProRule" id="PRU00204"/>
    </source>
</evidence>
<evidence type="ECO:0000269" key="3">
    <source>
    </source>
</evidence>
<evidence type="ECO:0000303" key="4">
    <source>
    </source>
</evidence>
<evidence type="ECO:0000305" key="5"/>
<evidence type="ECO:0000312" key="6">
    <source>
        <dbReference type="Araport" id="AT5G17880"/>
    </source>
</evidence>
<evidence type="ECO:0000312" key="7">
    <source>
        <dbReference type="EMBL" id="BAB11221.1"/>
    </source>
</evidence>
<feature type="chain" id="PRO_0000433382" description="Disease resistance-like protein CSA1">
    <location>
        <begin position="1"/>
        <end position="1197"/>
    </location>
</feature>
<feature type="domain" description="TIR" evidence="2">
    <location>
        <begin position="15"/>
        <end position="178"/>
    </location>
</feature>
<feature type="domain" description="NB-ARC" evidence="1">
    <location>
        <begin position="210"/>
        <end position="480"/>
    </location>
</feature>
<feature type="repeat" description="LRR 1" evidence="1">
    <location>
        <begin position="614"/>
        <end position="636"/>
    </location>
</feature>
<feature type="repeat" description="LRR 2" evidence="1">
    <location>
        <begin position="638"/>
        <end position="659"/>
    </location>
</feature>
<feature type="repeat" description="LRR 3" evidence="1">
    <location>
        <begin position="694"/>
        <end position="716"/>
    </location>
</feature>
<feature type="repeat" description="LRR 4" evidence="1">
    <location>
        <begin position="728"/>
        <end position="749"/>
    </location>
</feature>
<feature type="repeat" description="LRR 5" evidence="1">
    <location>
        <begin position="750"/>
        <end position="774"/>
    </location>
</feature>
<feature type="repeat" description="LRR 6" evidence="1">
    <location>
        <begin position="776"/>
        <end position="796"/>
    </location>
</feature>
<feature type="repeat" description="LRR 7" evidence="1">
    <location>
        <begin position="797"/>
        <end position="819"/>
    </location>
</feature>
<feature type="repeat" description="LRR 8" evidence="1">
    <location>
        <begin position="820"/>
        <end position="843"/>
    </location>
</feature>
<feature type="repeat" description="LRR 9" evidence="1">
    <location>
        <begin position="845"/>
        <end position="862"/>
    </location>
</feature>
<feature type="repeat" description="LRR 10" evidence="1">
    <location>
        <begin position="863"/>
        <end position="889"/>
    </location>
</feature>
<feature type="active site" evidence="2">
    <location>
        <position position="89"/>
    </location>
</feature>
<sequence length="1197" mass="135859">MTSSSSWVKTDGETPQDQVFINFRGVELRKNFVSHLEKGLKRKGINAFIDTDEEMGQELSVLLERIEGSRIALAIFSPRYTESKWCLKELAKMKERTEQKELVVIPIFYKVQPVTVKELKGDFGDKFRELVKSTDKKTKKEWKEALQYVPFLTGIVLDEKSDEDEVINIIIRKVKEILNRRSEGPPSKCSALPPQRHQKRHETFWGIELRIKQLEEKLRFGSDETTRTIGVVGMPGIGKTTLATMLYEKWNDRFLRHVLIRDIHEASEEDGLNYLATKFLQGLLKVENANIESVQAAHEAYKDQLLETKVLVILDNVSNKDQVDALLGERNWIKKGSKILITTSDKSLMIQSLVNDTYEVPPLSDKDAIKHFIRYAFDGNEGAAPGPGQGNFPKLSKDFVHYTKGNPLALQMLGKELLGKDESHWGLKLNALDQHHNSPPGQSICKMLQRVWEGSYKALSQKEKDALLDIACFRSQDENYVASLLDSDGPSNILEDLVNKFMINIYAGKVDMHDTLYMLSKELGREATATDRKGRHRLWHHHTIIAVLDKNKGGSNIRSIFLDLSDITRKWCFYRHAFAMMRDLRYLKIYSTHCPQECESDIKLNFPEGLLLPLNEVRYLHWLKFPLKEVPQDFNPGNLVDLKLPYSEIERVWEDNKDAPKLKWVNLNHSKKLNTLAGLGKAQNLQELNLEGCTALKEMHVDMENMKFLVFLNLRGCTSLKSLPEIQLISLKTLILSGCSKFKTFQVISDKLEALYLDGTAIKELPCDIGRLQRLVMLNMKGCKKLKRLPDSLGQLKALEELILSGCSKLNEFPETWGNMSRLEILLLDETAIKDMPKILSVRRLCLNKNEKISRLPDLLNKFSQLQWLHLKYCKNLTHVPQLPPNLQYLNVHGCSSLKTVAKPLVCSIPMKHVNSSFIFTNCNELEQAAKEEIVVYAERKCHLLASALKRCDESCVPEILFCTSFPGCEMPSWFSHDAIGSMVEFELPPHWNHNRLSGIALCVVVSFKNCKSHANLIVKFSCEQNNGEGSSSSITWKVGSLIEQDNQEETVESDHVFIGYTNCLDFIKLVKGQGGPKCAPTKASLEFSVRTGTGGEATLEVLKSGFSFVFEPEENRVPSPRNDDVKGKVKINKTPSANGCFKDQAKGNESPKGQWQTYIENSSTNIPSEAHSSQKTGFNGFNGMYSVCVLYEMYSH</sequence>
<proteinExistence type="inferred from homology"/>
<comment type="function">
    <text evidence="3">TIR-NB-LRR receptor-like protein that functions in photomorphogenic development. May function downstream of phytochrome B (phyB) signaling.</text>
</comment>
<comment type="catalytic activity">
    <reaction evidence="2">
        <text>NAD(+) + H2O = ADP-D-ribose + nicotinamide + H(+)</text>
        <dbReference type="Rhea" id="RHEA:16301"/>
        <dbReference type="ChEBI" id="CHEBI:15377"/>
        <dbReference type="ChEBI" id="CHEBI:15378"/>
        <dbReference type="ChEBI" id="CHEBI:17154"/>
        <dbReference type="ChEBI" id="CHEBI:57540"/>
        <dbReference type="ChEBI" id="CHEBI:57967"/>
        <dbReference type="EC" id="3.2.2.6"/>
    </reaction>
    <physiologicalReaction direction="left-to-right" evidence="2">
        <dbReference type="Rhea" id="RHEA:16302"/>
    </physiologicalReaction>
</comment>
<comment type="domain">
    <text evidence="2">The TIR domain mediates NAD(+) hydrolase (NADase) activity. Self-association of TIR domains is required for NADase activity.</text>
</comment>
<comment type="disruption phenotype">
    <text evidence="3">Shade avoidance phenotype in the absence of shade and enhanced growth of the bacterial pathogen P.syringae pv. tomato DC3000 (avirulent avrRpt2 strain). The constitutive shade avoidance phenotype can be rescued by RPS4, a TIR-NBS-LRR protein that confers resistance against bacterium Pseudomonas syringae.</text>
</comment>
<comment type="sequence caution" evidence="5">
    <conflict type="erroneous gene model prediction">
        <sequence resource="EMBL-CDS" id="BAB11221"/>
    </conflict>
</comment>
<accession>F4KIF3</accession>
<accession>Q9FKN9</accession>
<gene>
    <name evidence="4" type="primary">CSA1</name>
    <name evidence="6" type="ordered locus">At5g17880</name>
    <name evidence="7" type="ORF">MPI7.4</name>
</gene>